<protein>
    <recommendedName>
        <fullName evidence="1">NADH-quinone oxidoreductase subunit H</fullName>
        <ecNumber evidence="1">7.1.1.-</ecNumber>
    </recommendedName>
    <alternativeName>
        <fullName evidence="1">NADH dehydrogenase I subunit H</fullName>
    </alternativeName>
    <alternativeName>
        <fullName evidence="1">NDH-1 subunit H</fullName>
    </alternativeName>
</protein>
<gene>
    <name evidence="1" type="primary">nuoH</name>
    <name type="ordered locus">Pmen_2418</name>
</gene>
<dbReference type="EC" id="7.1.1.-" evidence="1"/>
<dbReference type="EMBL" id="CP000680">
    <property type="protein sequence ID" value="ABP85174.1"/>
    <property type="molecule type" value="Genomic_DNA"/>
</dbReference>
<dbReference type="SMR" id="A4XV08"/>
<dbReference type="STRING" id="399739.Pmen_2418"/>
<dbReference type="KEGG" id="pmy:Pmen_2418"/>
<dbReference type="PATRIC" id="fig|399739.8.peg.2440"/>
<dbReference type="eggNOG" id="COG1005">
    <property type="taxonomic scope" value="Bacteria"/>
</dbReference>
<dbReference type="HOGENOM" id="CLU_015134_0_1_6"/>
<dbReference type="OrthoDB" id="9803734at2"/>
<dbReference type="GO" id="GO:0005886">
    <property type="term" value="C:plasma membrane"/>
    <property type="evidence" value="ECO:0007669"/>
    <property type="project" value="UniProtKB-SubCell"/>
</dbReference>
<dbReference type="GO" id="GO:0003954">
    <property type="term" value="F:NADH dehydrogenase activity"/>
    <property type="evidence" value="ECO:0007669"/>
    <property type="project" value="TreeGrafter"/>
</dbReference>
<dbReference type="GO" id="GO:0016655">
    <property type="term" value="F:oxidoreductase activity, acting on NAD(P)H, quinone or similar compound as acceptor"/>
    <property type="evidence" value="ECO:0007669"/>
    <property type="project" value="UniProtKB-UniRule"/>
</dbReference>
<dbReference type="GO" id="GO:0048038">
    <property type="term" value="F:quinone binding"/>
    <property type="evidence" value="ECO:0007669"/>
    <property type="project" value="UniProtKB-KW"/>
</dbReference>
<dbReference type="GO" id="GO:0009060">
    <property type="term" value="P:aerobic respiration"/>
    <property type="evidence" value="ECO:0007669"/>
    <property type="project" value="TreeGrafter"/>
</dbReference>
<dbReference type="HAMAP" id="MF_01350">
    <property type="entry name" value="NDH1_NuoH"/>
    <property type="match status" value="1"/>
</dbReference>
<dbReference type="InterPro" id="IPR001694">
    <property type="entry name" value="NADH_UbQ_OxRdtase_su1/FPO"/>
</dbReference>
<dbReference type="InterPro" id="IPR018086">
    <property type="entry name" value="NADH_UbQ_OxRdtase_su1_CS"/>
</dbReference>
<dbReference type="NCBIfam" id="NF004740">
    <property type="entry name" value="PRK06076.1-1"/>
    <property type="match status" value="1"/>
</dbReference>
<dbReference type="NCBIfam" id="NF004741">
    <property type="entry name" value="PRK06076.1-2"/>
    <property type="match status" value="1"/>
</dbReference>
<dbReference type="PANTHER" id="PTHR11432">
    <property type="entry name" value="NADH DEHYDROGENASE SUBUNIT 1"/>
    <property type="match status" value="1"/>
</dbReference>
<dbReference type="PANTHER" id="PTHR11432:SF3">
    <property type="entry name" value="NADH-UBIQUINONE OXIDOREDUCTASE CHAIN 1"/>
    <property type="match status" value="1"/>
</dbReference>
<dbReference type="Pfam" id="PF00146">
    <property type="entry name" value="NADHdh"/>
    <property type="match status" value="1"/>
</dbReference>
<dbReference type="PROSITE" id="PS00667">
    <property type="entry name" value="COMPLEX1_ND1_1"/>
    <property type="match status" value="1"/>
</dbReference>
<dbReference type="PROSITE" id="PS00668">
    <property type="entry name" value="COMPLEX1_ND1_2"/>
    <property type="match status" value="1"/>
</dbReference>
<sequence length="330" mass="37029">MNWLTPELIEILVAVLKAIVILLAVVVCGALLSFVERRLLGWWQDRYGPNRVGPFGMFQIAADMIKMFFKEDWTPPFADRFIFVLAPMIAFAAMLMAFAIIPITPTWGVADLNIGILFFFAMAGLSVYAVLFAGWSSNNKFALLGSLRASAQTISYEVFLALALMGVVAQVGSFNMRDIVDYQAQNLWFIIPQFFGFCTFFIAGVAVTHRHPFDQPEAEQELADGYHIEYAGMKWGMFFVGEYVGIVTISALLVTLFFGGWHGPFGLLPQIPFFWFALKTAFFIMIFILLRASIPRPRYDQVMAFSWKFCLPLTLINLLVTGALVLAAAQ</sequence>
<accession>A4XV08</accession>
<name>NUOH_ECTM1</name>
<reference key="1">
    <citation type="submission" date="2007-04" db="EMBL/GenBank/DDBJ databases">
        <title>Complete sequence of Pseudomonas mendocina ymp.</title>
        <authorList>
            <consortium name="US DOE Joint Genome Institute"/>
            <person name="Copeland A."/>
            <person name="Lucas S."/>
            <person name="Lapidus A."/>
            <person name="Barry K."/>
            <person name="Glavina del Rio T."/>
            <person name="Dalin E."/>
            <person name="Tice H."/>
            <person name="Pitluck S."/>
            <person name="Kiss H."/>
            <person name="Brettin T."/>
            <person name="Detter J.C."/>
            <person name="Bruce D."/>
            <person name="Han C."/>
            <person name="Schmutz J."/>
            <person name="Larimer F."/>
            <person name="Land M."/>
            <person name="Hauser L."/>
            <person name="Kyrpides N."/>
            <person name="Mikhailova N."/>
            <person name="Hersman L."/>
            <person name="Dubois J."/>
            <person name="Maurice P."/>
            <person name="Richardson P."/>
        </authorList>
    </citation>
    <scope>NUCLEOTIDE SEQUENCE [LARGE SCALE GENOMIC DNA]</scope>
    <source>
        <strain>ymp</strain>
    </source>
</reference>
<proteinExistence type="inferred from homology"/>
<organism>
    <name type="scientific">Ectopseudomonas mendocina (strain ymp)</name>
    <name type="common">Pseudomonas mendocina</name>
    <dbReference type="NCBI Taxonomy" id="399739"/>
    <lineage>
        <taxon>Bacteria</taxon>
        <taxon>Pseudomonadati</taxon>
        <taxon>Pseudomonadota</taxon>
        <taxon>Gammaproteobacteria</taxon>
        <taxon>Pseudomonadales</taxon>
        <taxon>Pseudomonadaceae</taxon>
        <taxon>Ectopseudomonas</taxon>
    </lineage>
</organism>
<keyword id="KW-0997">Cell inner membrane</keyword>
<keyword id="KW-1003">Cell membrane</keyword>
<keyword id="KW-0472">Membrane</keyword>
<keyword id="KW-0520">NAD</keyword>
<keyword id="KW-0874">Quinone</keyword>
<keyword id="KW-1278">Translocase</keyword>
<keyword id="KW-0812">Transmembrane</keyword>
<keyword id="KW-1133">Transmembrane helix</keyword>
<keyword id="KW-0830">Ubiquinone</keyword>
<feature type="chain" id="PRO_1000067752" description="NADH-quinone oxidoreductase subunit H">
    <location>
        <begin position="1"/>
        <end position="330"/>
    </location>
</feature>
<feature type="transmembrane region" description="Helical" evidence="1">
    <location>
        <begin position="11"/>
        <end position="31"/>
    </location>
</feature>
<feature type="transmembrane region" description="Helical" evidence="1">
    <location>
        <begin position="81"/>
        <end position="101"/>
    </location>
</feature>
<feature type="transmembrane region" description="Helical" evidence="1">
    <location>
        <begin position="114"/>
        <end position="134"/>
    </location>
</feature>
<feature type="transmembrane region" description="Helical" evidence="1">
    <location>
        <begin position="154"/>
        <end position="174"/>
    </location>
</feature>
<feature type="transmembrane region" description="Helical" evidence="1">
    <location>
        <begin position="187"/>
        <end position="207"/>
    </location>
</feature>
<feature type="transmembrane region" description="Helical" evidence="1">
    <location>
        <begin position="238"/>
        <end position="258"/>
    </location>
</feature>
<feature type="transmembrane region" description="Helical" evidence="1">
    <location>
        <begin position="270"/>
        <end position="290"/>
    </location>
</feature>
<feature type="transmembrane region" description="Helical" evidence="1">
    <location>
        <begin position="309"/>
        <end position="329"/>
    </location>
</feature>
<comment type="function">
    <text evidence="1">NDH-1 shuttles electrons from NADH, via FMN and iron-sulfur (Fe-S) centers, to quinones in the respiratory chain. The immediate electron acceptor for the enzyme in this species is believed to be ubiquinone. Couples the redox reaction to proton translocation (for every two electrons transferred, four hydrogen ions are translocated across the cytoplasmic membrane), and thus conserves the redox energy in a proton gradient. This subunit may bind ubiquinone.</text>
</comment>
<comment type="catalytic activity">
    <reaction evidence="1">
        <text>a quinone + NADH + 5 H(+)(in) = a quinol + NAD(+) + 4 H(+)(out)</text>
        <dbReference type="Rhea" id="RHEA:57888"/>
        <dbReference type="ChEBI" id="CHEBI:15378"/>
        <dbReference type="ChEBI" id="CHEBI:24646"/>
        <dbReference type="ChEBI" id="CHEBI:57540"/>
        <dbReference type="ChEBI" id="CHEBI:57945"/>
        <dbReference type="ChEBI" id="CHEBI:132124"/>
    </reaction>
</comment>
<comment type="subunit">
    <text evidence="1">NDH-1 is composed of 13 different subunits. Subunits NuoA, H, J, K, L, M, N constitute the membrane sector of the complex.</text>
</comment>
<comment type="subcellular location">
    <subcellularLocation>
        <location evidence="1">Cell inner membrane</location>
        <topology evidence="1">Multi-pass membrane protein</topology>
    </subcellularLocation>
</comment>
<comment type="similarity">
    <text evidence="1">Belongs to the complex I subunit 1 family.</text>
</comment>
<evidence type="ECO:0000255" key="1">
    <source>
        <dbReference type="HAMAP-Rule" id="MF_01350"/>
    </source>
</evidence>